<evidence type="ECO:0000255" key="1">
    <source>
        <dbReference type="HAMAP-Rule" id="MF_00041"/>
    </source>
</evidence>
<organism>
    <name type="scientific">Listeria monocytogenes serotype 4b (strain F2365)</name>
    <dbReference type="NCBI Taxonomy" id="265669"/>
    <lineage>
        <taxon>Bacteria</taxon>
        <taxon>Bacillati</taxon>
        <taxon>Bacillota</taxon>
        <taxon>Bacilli</taxon>
        <taxon>Bacillales</taxon>
        <taxon>Listeriaceae</taxon>
        <taxon>Listeria</taxon>
    </lineage>
</organism>
<reference key="1">
    <citation type="journal article" date="2004" name="Nucleic Acids Res.">
        <title>Whole genome comparisons of serotype 4b and 1/2a strains of the food-borne pathogen Listeria monocytogenes reveal new insights into the core genome components of this species.</title>
        <authorList>
            <person name="Nelson K.E."/>
            <person name="Fouts D.E."/>
            <person name="Mongodin E.F."/>
            <person name="Ravel J."/>
            <person name="DeBoy R.T."/>
            <person name="Kolonay J.F."/>
            <person name="Rasko D.A."/>
            <person name="Angiuoli S.V."/>
            <person name="Gill S.R."/>
            <person name="Paulsen I.T."/>
            <person name="Peterson J.D."/>
            <person name="White O."/>
            <person name="Nelson W.C."/>
            <person name="Nierman W.C."/>
            <person name="Beanan M.J."/>
            <person name="Brinkac L.M."/>
            <person name="Daugherty S.C."/>
            <person name="Dodson R.J."/>
            <person name="Durkin A.S."/>
            <person name="Madupu R."/>
            <person name="Haft D.H."/>
            <person name="Selengut J."/>
            <person name="Van Aken S.E."/>
            <person name="Khouri H.M."/>
            <person name="Fedorova N."/>
            <person name="Forberger H.A."/>
            <person name="Tran B."/>
            <person name="Kathariou S."/>
            <person name="Wonderling L.D."/>
            <person name="Uhlich G.A."/>
            <person name="Bayles D.O."/>
            <person name="Luchansky J.B."/>
            <person name="Fraser C.M."/>
        </authorList>
    </citation>
    <scope>NUCLEOTIDE SEQUENCE [LARGE SCALE GENOMIC DNA]</scope>
    <source>
        <strain>F2365</strain>
    </source>
</reference>
<dbReference type="EC" id="6.1.1.16" evidence="1"/>
<dbReference type="EMBL" id="AE017262">
    <property type="protein sequence ID" value="AAT03038.1"/>
    <property type="molecule type" value="Genomic_DNA"/>
</dbReference>
<dbReference type="RefSeq" id="WP_003724083.1">
    <property type="nucleotide sequence ID" value="NC_002973.6"/>
</dbReference>
<dbReference type="SMR" id="Q724H3"/>
<dbReference type="KEGG" id="lmf:LMOf2365_0251"/>
<dbReference type="HOGENOM" id="CLU_013528_0_1_9"/>
<dbReference type="GO" id="GO:0005829">
    <property type="term" value="C:cytosol"/>
    <property type="evidence" value="ECO:0007669"/>
    <property type="project" value="TreeGrafter"/>
</dbReference>
<dbReference type="GO" id="GO:0005524">
    <property type="term" value="F:ATP binding"/>
    <property type="evidence" value="ECO:0007669"/>
    <property type="project" value="UniProtKB-UniRule"/>
</dbReference>
<dbReference type="GO" id="GO:0004817">
    <property type="term" value="F:cysteine-tRNA ligase activity"/>
    <property type="evidence" value="ECO:0007669"/>
    <property type="project" value="UniProtKB-UniRule"/>
</dbReference>
<dbReference type="GO" id="GO:0008270">
    <property type="term" value="F:zinc ion binding"/>
    <property type="evidence" value="ECO:0007669"/>
    <property type="project" value="UniProtKB-UniRule"/>
</dbReference>
<dbReference type="GO" id="GO:0006423">
    <property type="term" value="P:cysteinyl-tRNA aminoacylation"/>
    <property type="evidence" value="ECO:0007669"/>
    <property type="project" value="UniProtKB-UniRule"/>
</dbReference>
<dbReference type="CDD" id="cd00672">
    <property type="entry name" value="CysRS_core"/>
    <property type="match status" value="1"/>
</dbReference>
<dbReference type="FunFam" id="1.20.120.1910:FF:000002">
    <property type="entry name" value="Cysteine--tRNA ligase"/>
    <property type="match status" value="1"/>
</dbReference>
<dbReference type="FunFam" id="3.40.50.620:FF:000009">
    <property type="entry name" value="Cysteine--tRNA ligase"/>
    <property type="match status" value="1"/>
</dbReference>
<dbReference type="Gene3D" id="1.20.120.1910">
    <property type="entry name" value="Cysteine-tRNA ligase, C-terminal anti-codon recognition domain"/>
    <property type="match status" value="1"/>
</dbReference>
<dbReference type="Gene3D" id="3.40.50.620">
    <property type="entry name" value="HUPs"/>
    <property type="match status" value="1"/>
</dbReference>
<dbReference type="HAMAP" id="MF_00041">
    <property type="entry name" value="Cys_tRNA_synth"/>
    <property type="match status" value="1"/>
</dbReference>
<dbReference type="InterPro" id="IPR015803">
    <property type="entry name" value="Cys-tRNA-ligase"/>
</dbReference>
<dbReference type="InterPro" id="IPR015273">
    <property type="entry name" value="Cys-tRNA-synt_Ia_DALR"/>
</dbReference>
<dbReference type="InterPro" id="IPR024909">
    <property type="entry name" value="Cys-tRNA/MSH_ligase"/>
</dbReference>
<dbReference type="InterPro" id="IPR014729">
    <property type="entry name" value="Rossmann-like_a/b/a_fold"/>
</dbReference>
<dbReference type="InterPro" id="IPR032678">
    <property type="entry name" value="tRNA-synt_1_cat_dom"/>
</dbReference>
<dbReference type="InterPro" id="IPR009080">
    <property type="entry name" value="tRNAsynth_Ia_anticodon-bd"/>
</dbReference>
<dbReference type="NCBIfam" id="TIGR00435">
    <property type="entry name" value="cysS"/>
    <property type="match status" value="1"/>
</dbReference>
<dbReference type="PANTHER" id="PTHR10890:SF3">
    <property type="entry name" value="CYSTEINE--TRNA LIGASE, CYTOPLASMIC"/>
    <property type="match status" value="1"/>
</dbReference>
<dbReference type="PANTHER" id="PTHR10890">
    <property type="entry name" value="CYSTEINYL-TRNA SYNTHETASE"/>
    <property type="match status" value="1"/>
</dbReference>
<dbReference type="Pfam" id="PF09190">
    <property type="entry name" value="DALR_2"/>
    <property type="match status" value="1"/>
</dbReference>
<dbReference type="Pfam" id="PF01406">
    <property type="entry name" value="tRNA-synt_1e"/>
    <property type="match status" value="1"/>
</dbReference>
<dbReference type="PRINTS" id="PR00983">
    <property type="entry name" value="TRNASYNTHCYS"/>
</dbReference>
<dbReference type="SMART" id="SM00840">
    <property type="entry name" value="DALR_2"/>
    <property type="match status" value="1"/>
</dbReference>
<dbReference type="SUPFAM" id="SSF47323">
    <property type="entry name" value="Anticodon-binding domain of a subclass of class I aminoacyl-tRNA synthetases"/>
    <property type="match status" value="1"/>
</dbReference>
<dbReference type="SUPFAM" id="SSF52374">
    <property type="entry name" value="Nucleotidylyl transferase"/>
    <property type="match status" value="1"/>
</dbReference>
<keyword id="KW-0030">Aminoacyl-tRNA synthetase</keyword>
<keyword id="KW-0067">ATP-binding</keyword>
<keyword id="KW-0963">Cytoplasm</keyword>
<keyword id="KW-0436">Ligase</keyword>
<keyword id="KW-0479">Metal-binding</keyword>
<keyword id="KW-0547">Nucleotide-binding</keyword>
<keyword id="KW-0648">Protein biosynthesis</keyword>
<keyword id="KW-0862">Zinc</keyword>
<name>SYC_LISMF</name>
<comment type="catalytic activity">
    <reaction evidence="1">
        <text>tRNA(Cys) + L-cysteine + ATP = L-cysteinyl-tRNA(Cys) + AMP + diphosphate</text>
        <dbReference type="Rhea" id="RHEA:17773"/>
        <dbReference type="Rhea" id="RHEA-COMP:9661"/>
        <dbReference type="Rhea" id="RHEA-COMP:9679"/>
        <dbReference type="ChEBI" id="CHEBI:30616"/>
        <dbReference type="ChEBI" id="CHEBI:33019"/>
        <dbReference type="ChEBI" id="CHEBI:35235"/>
        <dbReference type="ChEBI" id="CHEBI:78442"/>
        <dbReference type="ChEBI" id="CHEBI:78517"/>
        <dbReference type="ChEBI" id="CHEBI:456215"/>
        <dbReference type="EC" id="6.1.1.16"/>
    </reaction>
</comment>
<comment type="cofactor">
    <cofactor evidence="1">
        <name>Zn(2+)</name>
        <dbReference type="ChEBI" id="CHEBI:29105"/>
    </cofactor>
    <text evidence="1">Binds 1 zinc ion per subunit.</text>
</comment>
<comment type="subunit">
    <text evidence="1">Monomer.</text>
</comment>
<comment type="subcellular location">
    <subcellularLocation>
        <location evidence="1">Cytoplasm</location>
    </subcellularLocation>
</comment>
<comment type="similarity">
    <text evidence="1">Belongs to the class-I aminoacyl-tRNA synthetase family.</text>
</comment>
<proteinExistence type="inferred from homology"/>
<accession>Q724H3</accession>
<protein>
    <recommendedName>
        <fullName evidence="1">Cysteine--tRNA ligase</fullName>
        <ecNumber evidence="1">6.1.1.16</ecNumber>
    </recommendedName>
    <alternativeName>
        <fullName evidence="1">Cysteinyl-tRNA synthetase</fullName>
        <shortName evidence="1">CysRS</shortName>
    </alternativeName>
</protein>
<feature type="chain" id="PRO_0000159422" description="Cysteine--tRNA ligase">
    <location>
        <begin position="1"/>
        <end position="471"/>
    </location>
</feature>
<feature type="short sequence motif" description="'HIGH' region">
    <location>
        <begin position="31"/>
        <end position="41"/>
    </location>
</feature>
<feature type="short sequence motif" description="'KMSKS' region">
    <location>
        <begin position="266"/>
        <end position="270"/>
    </location>
</feature>
<feature type="binding site" evidence="1">
    <location>
        <position position="29"/>
    </location>
    <ligand>
        <name>Zn(2+)</name>
        <dbReference type="ChEBI" id="CHEBI:29105"/>
    </ligand>
</feature>
<feature type="binding site" evidence="1">
    <location>
        <position position="209"/>
    </location>
    <ligand>
        <name>Zn(2+)</name>
        <dbReference type="ChEBI" id="CHEBI:29105"/>
    </ligand>
</feature>
<feature type="binding site" evidence="1">
    <location>
        <position position="234"/>
    </location>
    <ligand>
        <name>Zn(2+)</name>
        <dbReference type="ChEBI" id="CHEBI:29105"/>
    </ligand>
</feature>
<feature type="binding site" evidence="1">
    <location>
        <position position="238"/>
    </location>
    <ligand>
        <name>Zn(2+)</name>
        <dbReference type="ChEBI" id="CHEBI:29105"/>
    </ligand>
</feature>
<feature type="binding site" evidence="1">
    <location>
        <position position="269"/>
    </location>
    <ligand>
        <name>ATP</name>
        <dbReference type="ChEBI" id="CHEBI:30616"/>
    </ligand>
</feature>
<gene>
    <name evidence="1" type="primary">cysS</name>
    <name type="ordered locus">LMOf2365_0251</name>
</gene>
<sequence>MSIQIFNTLKREKEPFKPLKDGEVKMYVCGPTVYNYIHIGNARPIIVFDTVRRYFTYRGYDVKFVSNFTDVDDKLIRAANELKLTVPEVADRFIGAYFDDVDQLNVAKATVNPRVTENMDEIIQLISTLIEKGYAYESAGDVYFRTKKFKDYGKLSGQELSELQHGARVEYNERKQDELDFTLWKAAKPGEIFWESPFGNGRPGWHIECSALAKKYLGDTIDIHAGGQDLVFPHHEDEIAQSEAATGKTFANYWMHNAFLNIDGEKMSKSLGNFITLHDVLKDNDPNVIRFFMLSVHYRKPITLNDAILEDAKNGLERLMIAYQNIDHRIQTDDGEYVEEAHEDEWLEQLTELKQAFEDDMDDDFNTANAITTFHELAKRANIYLAKETVSINVLREFLSMMRLFAEVLGLKLENTQTDSLDDSEVEALIEERLQARNERNFARADEIRDILKEKNIILEDTAQGTRFRRG</sequence>